<evidence type="ECO:0000255" key="1">
    <source>
        <dbReference type="HAMAP-Rule" id="MF_00165"/>
    </source>
</evidence>
<organism>
    <name type="scientific">Mesomycoplasma hyopneumoniae (strain 232)</name>
    <name type="common">Mycoplasma hyopneumoniae</name>
    <dbReference type="NCBI Taxonomy" id="295358"/>
    <lineage>
        <taxon>Bacteria</taxon>
        <taxon>Bacillati</taxon>
        <taxon>Mycoplasmatota</taxon>
        <taxon>Mycoplasmoidales</taxon>
        <taxon>Metamycoplasmataceae</taxon>
        <taxon>Mesomycoplasma</taxon>
    </lineage>
</organism>
<feature type="chain" id="PRO_0000155303" description="Thymidylate kinase">
    <location>
        <begin position="1"/>
        <end position="211"/>
    </location>
</feature>
<feature type="binding site" evidence="1">
    <location>
        <begin position="7"/>
        <end position="14"/>
    </location>
    <ligand>
        <name>ATP</name>
        <dbReference type="ChEBI" id="CHEBI:30616"/>
    </ligand>
</feature>
<gene>
    <name evidence="1" type="primary">tmk</name>
    <name type="ordered locus">mhp120</name>
</gene>
<proteinExistence type="inferred from homology"/>
<protein>
    <recommendedName>
        <fullName evidence="1">Thymidylate kinase</fullName>
        <ecNumber evidence="1">2.7.4.9</ecNumber>
    </recommendedName>
    <alternativeName>
        <fullName evidence="1">dTMP kinase</fullName>
    </alternativeName>
</protein>
<comment type="function">
    <text evidence="1">Phosphorylation of dTMP to form dTDP in both de novo and salvage pathways of dTTP synthesis.</text>
</comment>
<comment type="catalytic activity">
    <reaction evidence="1">
        <text>dTMP + ATP = dTDP + ADP</text>
        <dbReference type="Rhea" id="RHEA:13517"/>
        <dbReference type="ChEBI" id="CHEBI:30616"/>
        <dbReference type="ChEBI" id="CHEBI:58369"/>
        <dbReference type="ChEBI" id="CHEBI:63528"/>
        <dbReference type="ChEBI" id="CHEBI:456216"/>
        <dbReference type="EC" id="2.7.4.9"/>
    </reaction>
</comment>
<comment type="similarity">
    <text evidence="1">Belongs to the thymidylate kinase family.</text>
</comment>
<reference key="1">
    <citation type="journal article" date="2004" name="J. Bacteriol.">
        <title>The genome sequence of Mycoplasma hyopneumoniae strain 232, the agent of swine mycoplasmosis.</title>
        <authorList>
            <person name="Minion F.C."/>
            <person name="Lefkowitz E.J."/>
            <person name="Madsen M.L."/>
            <person name="Cleary B.J."/>
            <person name="Swartzell S.M."/>
            <person name="Mahairas G.G."/>
        </authorList>
    </citation>
    <scope>NUCLEOTIDE SEQUENCE [LARGE SCALE GENOMIC DNA]</scope>
    <source>
        <strain>232</strain>
    </source>
</reference>
<name>KTHY_MESH2</name>
<accession>Q601T1</accession>
<keyword id="KW-0067">ATP-binding</keyword>
<keyword id="KW-0418">Kinase</keyword>
<keyword id="KW-0545">Nucleotide biosynthesis</keyword>
<keyword id="KW-0547">Nucleotide-binding</keyword>
<keyword id="KW-0808">Transferase</keyword>
<sequence length="211" mass="24457">MFISFEGIDASGKSTVMDLFAKYLKIKFPEKEIVTTFEPGGKNLKEALQIREFLLSKNNQISPYVEMLLFATARRIHLERLIWPALKAGKIVLCDRYIDSSIAYQGFGNGLDIDLVTSLNSLISENTFPDLTIFLDIKISKAFERMGIFRDHNRDRLENRGVEFYEKVINGYEFLAKKNKNFFKIDGNGTYDEVLDLIIDFFEKYYASWPK</sequence>
<dbReference type="EC" id="2.7.4.9" evidence="1"/>
<dbReference type="EMBL" id="AE017332">
    <property type="protein sequence ID" value="AAV27724.1"/>
    <property type="molecule type" value="Genomic_DNA"/>
</dbReference>
<dbReference type="RefSeq" id="WP_011205958.1">
    <property type="nucleotide sequence ID" value="NC_006360.1"/>
</dbReference>
<dbReference type="SMR" id="Q601T1"/>
<dbReference type="GeneID" id="41334557"/>
<dbReference type="KEGG" id="mhy:mhp120"/>
<dbReference type="eggNOG" id="COG0125">
    <property type="taxonomic scope" value="Bacteria"/>
</dbReference>
<dbReference type="HOGENOM" id="CLU_049131_0_2_14"/>
<dbReference type="PhylomeDB" id="Q601T1"/>
<dbReference type="Proteomes" id="UP000006822">
    <property type="component" value="Chromosome"/>
</dbReference>
<dbReference type="GO" id="GO:0005829">
    <property type="term" value="C:cytosol"/>
    <property type="evidence" value="ECO:0007669"/>
    <property type="project" value="TreeGrafter"/>
</dbReference>
<dbReference type="GO" id="GO:0005524">
    <property type="term" value="F:ATP binding"/>
    <property type="evidence" value="ECO:0007669"/>
    <property type="project" value="UniProtKB-UniRule"/>
</dbReference>
<dbReference type="GO" id="GO:0004798">
    <property type="term" value="F:dTMP kinase activity"/>
    <property type="evidence" value="ECO:0007669"/>
    <property type="project" value="UniProtKB-UniRule"/>
</dbReference>
<dbReference type="GO" id="GO:0006233">
    <property type="term" value="P:dTDP biosynthetic process"/>
    <property type="evidence" value="ECO:0007669"/>
    <property type="project" value="InterPro"/>
</dbReference>
<dbReference type="GO" id="GO:0006235">
    <property type="term" value="P:dTTP biosynthetic process"/>
    <property type="evidence" value="ECO:0007669"/>
    <property type="project" value="UniProtKB-UniRule"/>
</dbReference>
<dbReference type="GO" id="GO:0006227">
    <property type="term" value="P:dUDP biosynthetic process"/>
    <property type="evidence" value="ECO:0007669"/>
    <property type="project" value="TreeGrafter"/>
</dbReference>
<dbReference type="CDD" id="cd01672">
    <property type="entry name" value="TMPK"/>
    <property type="match status" value="1"/>
</dbReference>
<dbReference type="FunFam" id="3.40.50.300:FF:000225">
    <property type="entry name" value="Thymidylate kinase"/>
    <property type="match status" value="1"/>
</dbReference>
<dbReference type="Gene3D" id="3.40.50.300">
    <property type="entry name" value="P-loop containing nucleotide triphosphate hydrolases"/>
    <property type="match status" value="1"/>
</dbReference>
<dbReference type="HAMAP" id="MF_00165">
    <property type="entry name" value="Thymidylate_kinase"/>
    <property type="match status" value="1"/>
</dbReference>
<dbReference type="InterPro" id="IPR027417">
    <property type="entry name" value="P-loop_NTPase"/>
</dbReference>
<dbReference type="InterPro" id="IPR039430">
    <property type="entry name" value="Thymidylate_kin-like_dom"/>
</dbReference>
<dbReference type="InterPro" id="IPR018095">
    <property type="entry name" value="Thymidylate_kin_CS"/>
</dbReference>
<dbReference type="InterPro" id="IPR018094">
    <property type="entry name" value="Thymidylate_kinase"/>
</dbReference>
<dbReference type="NCBIfam" id="TIGR00041">
    <property type="entry name" value="DTMP_kinase"/>
    <property type="match status" value="1"/>
</dbReference>
<dbReference type="PANTHER" id="PTHR10344">
    <property type="entry name" value="THYMIDYLATE KINASE"/>
    <property type="match status" value="1"/>
</dbReference>
<dbReference type="PANTHER" id="PTHR10344:SF4">
    <property type="entry name" value="UMP-CMP KINASE 2, MITOCHONDRIAL"/>
    <property type="match status" value="1"/>
</dbReference>
<dbReference type="Pfam" id="PF02223">
    <property type="entry name" value="Thymidylate_kin"/>
    <property type="match status" value="1"/>
</dbReference>
<dbReference type="SUPFAM" id="SSF52540">
    <property type="entry name" value="P-loop containing nucleoside triphosphate hydrolases"/>
    <property type="match status" value="1"/>
</dbReference>
<dbReference type="PROSITE" id="PS01331">
    <property type="entry name" value="THYMIDYLATE_KINASE"/>
    <property type="match status" value="1"/>
</dbReference>